<evidence type="ECO:0000255" key="1"/>
<evidence type="ECO:0000269" key="2">
    <source>
    </source>
</evidence>
<evidence type="ECO:0000269" key="3">
    <source>
    </source>
</evidence>
<evidence type="ECO:0000305" key="4"/>
<evidence type="ECO:0000312" key="5">
    <source>
        <dbReference type="MGI" id="MGI:3646230"/>
    </source>
</evidence>
<reference key="1">
    <citation type="journal article" date="2009" name="PLoS Biol.">
        <title>Lineage-specific biology revealed by a finished genome assembly of the mouse.</title>
        <authorList>
            <person name="Church D.M."/>
            <person name="Goodstadt L."/>
            <person name="Hillier L.W."/>
            <person name="Zody M.C."/>
            <person name="Goldstein S."/>
            <person name="She X."/>
            <person name="Bult C.J."/>
            <person name="Agarwala R."/>
            <person name="Cherry J.L."/>
            <person name="DiCuccio M."/>
            <person name="Hlavina W."/>
            <person name="Kapustin Y."/>
            <person name="Meric P."/>
            <person name="Maglott D."/>
            <person name="Birtle Z."/>
            <person name="Marques A.C."/>
            <person name="Graves T."/>
            <person name="Zhou S."/>
            <person name="Teague B."/>
            <person name="Potamousis K."/>
            <person name="Churas C."/>
            <person name="Place M."/>
            <person name="Herschleb J."/>
            <person name="Runnheim R."/>
            <person name="Forrest D."/>
            <person name="Amos-Landgraf J."/>
            <person name="Schwartz D.C."/>
            <person name="Cheng Z."/>
            <person name="Lindblad-Toh K."/>
            <person name="Eichler E.E."/>
            <person name="Ponting C.P."/>
        </authorList>
    </citation>
    <scope>NUCLEOTIDE SEQUENCE [LARGE SCALE GENOMIC DNA]</scope>
    <source>
        <strain>C57BL/6J</strain>
    </source>
</reference>
<reference key="2">
    <citation type="journal article" date="2004" name="Genome Res.">
        <title>The status, quality, and expansion of the NIH full-length cDNA project: the Mammalian Gene Collection (MGC).</title>
        <authorList>
            <consortium name="The MGC Project Team"/>
        </authorList>
    </citation>
    <scope>NUCLEOTIDE SEQUENCE [LARGE SCALE MRNA]</scope>
    <source>
        <tissue>Brain</tissue>
    </source>
</reference>
<reference key="3">
    <citation type="journal article" date="2019" name="EMBO Mol. Med.">
        <title>Clarin-2 is essential for hearing by maintaining stereocilia integrity and function.</title>
        <authorList>
            <person name="Dunbar L.A."/>
            <person name="Patni P."/>
            <person name="Aguilar C."/>
            <person name="Mburu P."/>
            <person name="Corns L."/>
            <person name="Wells H.R."/>
            <person name="Delmaghani S."/>
            <person name="Parker A."/>
            <person name="Johnson S."/>
            <person name="Williams D."/>
            <person name="Esapa C.T."/>
            <person name="Simon M.M."/>
            <person name="Chessum L."/>
            <person name="Newton S."/>
            <person name="Dorning J."/>
            <person name="Jeyarajan P."/>
            <person name="Morse S."/>
            <person name="Lelli A."/>
            <person name="Codner G.F."/>
            <person name="Peineau T."/>
            <person name="Gopal S.R."/>
            <person name="Alagramam K.N."/>
            <person name="Hertzano R."/>
            <person name="Dulon D."/>
            <person name="Wells S."/>
            <person name="Williams F.M."/>
            <person name="Petit C."/>
            <person name="Dawson S.J."/>
            <person name="Brown S.D."/>
            <person name="Marcotti W."/>
            <person name="El-Amraoui A."/>
            <person name="Bowl M.R."/>
        </authorList>
    </citation>
    <scope>DISRUPTION PHENOTYPE</scope>
    <scope>FUNCTION</scope>
    <scope>TISSUE SPECIFICITY</scope>
    <scope>DEVELOPMENTAL STAGE</scope>
</reference>
<reference key="4">
    <citation type="journal article" date="2021" name="Hum. Genet.">
        <title>A biallelic variant in CLRN2 causes non-syndromic hearing loss in humans.</title>
        <authorList>
            <person name="Vona B."/>
            <person name="Mazaheri N."/>
            <person name="Lin S.J."/>
            <person name="Dunbar L.A."/>
            <person name="Maroofian R."/>
            <person name="Azaiez H."/>
            <person name="Booth K.T."/>
            <person name="Vitry S."/>
            <person name="Rad A."/>
            <person name="Rueschendorf F."/>
            <person name="Varshney P."/>
            <person name="Fowler B."/>
            <person name="Beetz C."/>
            <person name="Alagramam K.N."/>
            <person name="Murphy D."/>
            <person name="Shariati G."/>
            <person name="Sedaghat A."/>
            <person name="Houlden H."/>
            <person name="Petree C."/>
            <person name="VijayKumar S."/>
            <person name="Smith R.J.H."/>
            <person name="Haaf T."/>
            <person name="El-Amraoui A."/>
            <person name="Bowl M.R."/>
            <person name="Varshney G.K."/>
            <person name="Galehdari H."/>
        </authorList>
    </citation>
    <scope>FUNCTION</scope>
</reference>
<name>CLRN2_MOUSE</name>
<protein>
    <recommendedName>
        <fullName>Clarin-2</fullName>
    </recommendedName>
</protein>
<feature type="chain" id="PRO_0000454159" description="Clarin-2">
    <location>
        <begin position="1"/>
        <end position="232"/>
    </location>
</feature>
<feature type="transmembrane region" description="Helical" evidence="1">
    <location>
        <begin position="8"/>
        <end position="28"/>
    </location>
</feature>
<feature type="transmembrane region" description="Helical" evidence="1">
    <location>
        <begin position="101"/>
        <end position="121"/>
    </location>
</feature>
<feature type="transmembrane region" description="Helical" evidence="1">
    <location>
        <begin position="139"/>
        <end position="159"/>
    </location>
</feature>
<feature type="transmembrane region" description="Helical" evidence="1">
    <location>
        <begin position="188"/>
        <end position="208"/>
    </location>
</feature>
<gene>
    <name evidence="5" type="primary">Clrn2</name>
</gene>
<dbReference type="EMBL" id="GL456117">
    <property type="status" value="NOT_ANNOTATED_CDS"/>
    <property type="molecule type" value="Genomic_DNA"/>
</dbReference>
<dbReference type="EMBL" id="BC147370">
    <property type="protein sequence ID" value="AAI47371.1"/>
    <property type="molecule type" value="mRNA"/>
</dbReference>
<dbReference type="EMBL" id="BC147371">
    <property type="protein sequence ID" value="AAI47372.1"/>
    <property type="molecule type" value="mRNA"/>
</dbReference>
<dbReference type="EMBL" id="BC147726">
    <property type="protein sequence ID" value="AAI47727.1"/>
    <property type="molecule type" value="mRNA"/>
</dbReference>
<dbReference type="EMBL" id="BC147731">
    <property type="protein sequence ID" value="AAI47732.1"/>
    <property type="molecule type" value="mRNA"/>
</dbReference>
<dbReference type="CCDS" id="CCDS51497.1"/>
<dbReference type="RefSeq" id="NP_001156789.1">
    <property type="nucleotide sequence ID" value="NM_001163317.2"/>
</dbReference>
<dbReference type="FunCoup" id="B2RVW2">
    <property type="interactions" value="28"/>
</dbReference>
<dbReference type="STRING" id="10090.ENSMUSP00000058204"/>
<dbReference type="PaxDb" id="10090-ENSMUSP00000058204"/>
<dbReference type="PeptideAtlas" id="B2RVW2"/>
<dbReference type="Antibodypedia" id="51092">
    <property type="antibodies" value="40 antibodies from 12 providers"/>
</dbReference>
<dbReference type="Ensembl" id="ENSMUST00000053250.5">
    <property type="protein sequence ID" value="ENSMUSP00000058204.5"/>
    <property type="gene ID" value="ENSMUSG00000049530.7"/>
</dbReference>
<dbReference type="GeneID" id="624224"/>
<dbReference type="KEGG" id="mmu:624224"/>
<dbReference type="UCSC" id="uc012dvy.1">
    <property type="organism name" value="mouse"/>
</dbReference>
<dbReference type="AGR" id="MGI:3646230"/>
<dbReference type="CTD" id="645104"/>
<dbReference type="MGI" id="MGI:3646230">
    <property type="gene designation" value="Clrn2"/>
</dbReference>
<dbReference type="VEuPathDB" id="HostDB:ENSMUSG00000049530"/>
<dbReference type="eggNOG" id="ENOG502QUCR">
    <property type="taxonomic scope" value="Eukaryota"/>
</dbReference>
<dbReference type="GeneTree" id="ENSGT00850000132319"/>
<dbReference type="HOGENOM" id="CLU_095723_1_0_1"/>
<dbReference type="InParanoid" id="B2RVW2"/>
<dbReference type="OMA" id="PKWMTGK"/>
<dbReference type="OrthoDB" id="10012538at2759"/>
<dbReference type="PhylomeDB" id="B2RVW2"/>
<dbReference type="TreeFam" id="TF331875"/>
<dbReference type="BioGRID-ORCS" id="624224">
    <property type="hits" value="1 hit in 76 CRISPR screens"/>
</dbReference>
<dbReference type="PRO" id="PR:B2RVW2"/>
<dbReference type="Proteomes" id="UP000000589">
    <property type="component" value="Chromosome 5"/>
</dbReference>
<dbReference type="RNAct" id="B2RVW2">
    <property type="molecule type" value="protein"/>
</dbReference>
<dbReference type="Bgee" id="ENSMUSG00000049530">
    <property type="expression patterns" value="Expressed in hippocampal formation and 3 other cell types or tissues"/>
</dbReference>
<dbReference type="GO" id="GO:0032421">
    <property type="term" value="C:stereocilium bundle"/>
    <property type="evidence" value="ECO:0000314"/>
    <property type="project" value="MGI"/>
</dbReference>
<dbReference type="GO" id="GO:0060171">
    <property type="term" value="C:stereocilium membrane"/>
    <property type="evidence" value="ECO:0007669"/>
    <property type="project" value="UniProtKB-SubCell"/>
</dbReference>
<dbReference type="GO" id="GO:0060088">
    <property type="term" value="P:auditory receptor cell stereocilium organization"/>
    <property type="evidence" value="ECO:0000315"/>
    <property type="project" value="UniProtKB"/>
</dbReference>
<dbReference type="GO" id="GO:0042491">
    <property type="term" value="P:inner ear auditory receptor cell differentiation"/>
    <property type="evidence" value="ECO:0000315"/>
    <property type="project" value="MGI"/>
</dbReference>
<dbReference type="GO" id="GO:0007605">
    <property type="term" value="P:sensory perception of sound"/>
    <property type="evidence" value="ECO:0000315"/>
    <property type="project" value="UniProtKB"/>
</dbReference>
<dbReference type="GO" id="GO:0120045">
    <property type="term" value="P:stereocilium maintenance"/>
    <property type="evidence" value="ECO:0000315"/>
    <property type="project" value="UniProtKB"/>
</dbReference>
<dbReference type="Gene3D" id="1.20.140.150">
    <property type="match status" value="1"/>
</dbReference>
<dbReference type="InterPro" id="IPR026748">
    <property type="entry name" value="Clarin"/>
</dbReference>
<dbReference type="PANTHER" id="PTHR31548">
    <property type="entry name" value="CLARIN"/>
    <property type="match status" value="1"/>
</dbReference>
<dbReference type="PANTHER" id="PTHR31548:SF5">
    <property type="entry name" value="CLARIN-2"/>
    <property type="match status" value="1"/>
</dbReference>
<keyword id="KW-1003">Cell membrane</keyword>
<keyword id="KW-0966">Cell projection</keyword>
<keyword id="KW-1009">Hearing</keyword>
<keyword id="KW-0472">Membrane</keyword>
<keyword id="KW-1185">Reference proteome</keyword>
<keyword id="KW-0812">Transmembrane</keyword>
<keyword id="KW-1133">Transmembrane helix</keyword>
<comment type="function">
    <text evidence="2 3">Plays a key role to hearing function. Required for normal organization and maintenance of the stereocilia bundle and for mechano-electrical transduction.</text>
</comment>
<comment type="subcellular location">
    <subcellularLocation>
        <location evidence="2">Cell projection</location>
        <location evidence="2">Stereocilium membrane</location>
        <topology evidence="1">Multi-pass membrane protein</topology>
    </subcellularLocation>
</comment>
<comment type="tissue specificity">
    <text evidence="2">Detected in inner ear, particularly in hair bundles of auditory hair cells and is enriched in apical stereocilia. Detected in eye, but not in brain or muscle.</text>
</comment>
<comment type="developmental stage">
    <text evidence="2">Expression in the cochlea is stable from late embryonic stages to P12 (the onset of hearing in mice), but thereafter increases.</text>
</comment>
<comment type="disruption phenotype">
    <text evidence="2">Mice homozygous for an ENU-induced allele exhibit an early-onset, progressive hearing loss, with a lack of fast-graded voltage responses. These mice harbor an early truncating nonsense variant (Trp4Ter). By postnatal days 6 (P6), mutants do not exhibit any gross patterning defects, or differences in the overall number of outer hair cells (OHC) and inner hair cells (IHC) bundles compared to controls. However, despite normal shape organization, these mice shown a progressive reduction in height of the middle and shortest row stereocilia, which is evident first in OHCs by P8, and then later in IHCs at P16.</text>
</comment>
<comment type="similarity">
    <text evidence="4">Belongs to the clarin family.</text>
</comment>
<accession>B2RVW2</accession>
<sequence length="232" mass="25486">MPGWFKKVWYGLASLLSFSSFLLIIVALSLPHWLSGKILCQTGVDLVNATDPELVKFIGDIYYGLFRGCKVRQCGLGGRQSQFTIFPHLVKELNAGLHVTILLLLFLALALALVSMGFAILNIIQVPYRAVNGPGGICLWNVLAGGVVALAIGSFMAAVKFHDLTERIANFQERLFQFVVVEEQYEESFWICVASASAHAANLVVVAISQIPLPEIKTKMEEATVTPEDILY</sequence>
<proteinExistence type="evidence at transcript level"/>
<organism>
    <name type="scientific">Mus musculus</name>
    <name type="common">Mouse</name>
    <dbReference type="NCBI Taxonomy" id="10090"/>
    <lineage>
        <taxon>Eukaryota</taxon>
        <taxon>Metazoa</taxon>
        <taxon>Chordata</taxon>
        <taxon>Craniata</taxon>
        <taxon>Vertebrata</taxon>
        <taxon>Euteleostomi</taxon>
        <taxon>Mammalia</taxon>
        <taxon>Eutheria</taxon>
        <taxon>Euarchontoglires</taxon>
        <taxon>Glires</taxon>
        <taxon>Rodentia</taxon>
        <taxon>Myomorpha</taxon>
        <taxon>Muroidea</taxon>
        <taxon>Muridae</taxon>
        <taxon>Murinae</taxon>
        <taxon>Mus</taxon>
        <taxon>Mus</taxon>
    </lineage>
</organism>